<sequence>MHENFDKRLELLLEGLSLTRRFLFDPEEKETELKNLEQLSIQDSFWDDVSRAGRISEKIARLKQQLLEYNELKNKINSIKFFLEDEESSKDLEIQKELEKEFIFCEKKIAEWETLRLLAGELDRNSCFLSINAGAGGTESCDWVEMLFRMYSRWANSHGWKVEVIDRLDGEVAGIKHITLKLIGEYAYGYAKAESGVHRLVRISPFDSNAKRHTSFASVEVFPEIDDKIEVEIRPGDIRIDTYRSSGAGGQHVNVTDSAVRITHFPTGIVVSCQSERSQIQNREACMNMLRARIYQKLLQERLEKQNTNRKEKKEISWGSQIRNYVFQPYTLVKDVRTGYEVGNIQAMMDGELLDAFIKAYLADYGEIT</sequence>
<proteinExistence type="inferred from homology"/>
<organism>
    <name type="scientific">Chlamydia muridarum (strain MoPn / Nigg)</name>
    <dbReference type="NCBI Taxonomy" id="243161"/>
    <lineage>
        <taxon>Bacteria</taxon>
        <taxon>Pseudomonadati</taxon>
        <taxon>Chlamydiota</taxon>
        <taxon>Chlamydiia</taxon>
        <taxon>Chlamydiales</taxon>
        <taxon>Chlamydiaceae</taxon>
        <taxon>Chlamydia/Chlamydophila group</taxon>
        <taxon>Chlamydia</taxon>
    </lineage>
</organism>
<dbReference type="EMBL" id="AE002160">
    <property type="status" value="NOT_ANNOTATED_CDS"/>
    <property type="molecule type" value="Genomic_DNA"/>
</dbReference>
<dbReference type="SMR" id="P58105"/>
<dbReference type="Proteomes" id="UP000000800">
    <property type="component" value="Chromosome"/>
</dbReference>
<dbReference type="GO" id="GO:0005737">
    <property type="term" value="C:cytoplasm"/>
    <property type="evidence" value="ECO:0007669"/>
    <property type="project" value="UniProtKB-SubCell"/>
</dbReference>
<dbReference type="GO" id="GO:0016149">
    <property type="term" value="F:translation release factor activity, codon specific"/>
    <property type="evidence" value="ECO:0007669"/>
    <property type="project" value="UniProtKB-UniRule"/>
</dbReference>
<dbReference type="GO" id="GO:0075523">
    <property type="term" value="P:viral translational frameshifting"/>
    <property type="evidence" value="ECO:0007669"/>
    <property type="project" value="UniProtKB-KW"/>
</dbReference>
<dbReference type="FunFam" id="3.30.160.20:FF:000004">
    <property type="entry name" value="Peptide chain release factor 1"/>
    <property type="match status" value="1"/>
</dbReference>
<dbReference type="Gene3D" id="3.30.160.20">
    <property type="match status" value="1"/>
</dbReference>
<dbReference type="Gene3D" id="3.30.70.1660">
    <property type="match status" value="1"/>
</dbReference>
<dbReference type="Gene3D" id="1.20.58.410">
    <property type="entry name" value="Release factor"/>
    <property type="match status" value="1"/>
</dbReference>
<dbReference type="HAMAP" id="MF_00094">
    <property type="entry name" value="Rel_fac_2"/>
    <property type="match status" value="1"/>
</dbReference>
<dbReference type="InterPro" id="IPR005139">
    <property type="entry name" value="PCRF"/>
</dbReference>
<dbReference type="InterPro" id="IPR000352">
    <property type="entry name" value="Pep_chain_release_fac_I"/>
</dbReference>
<dbReference type="InterPro" id="IPR045853">
    <property type="entry name" value="Pep_chain_release_fac_I_sf"/>
</dbReference>
<dbReference type="InterPro" id="IPR004374">
    <property type="entry name" value="PrfB"/>
</dbReference>
<dbReference type="NCBIfam" id="TIGR00020">
    <property type="entry name" value="prfB"/>
    <property type="match status" value="1"/>
</dbReference>
<dbReference type="PANTHER" id="PTHR43116:SF3">
    <property type="entry name" value="CLASS I PEPTIDE CHAIN RELEASE FACTOR"/>
    <property type="match status" value="1"/>
</dbReference>
<dbReference type="PANTHER" id="PTHR43116">
    <property type="entry name" value="PEPTIDE CHAIN RELEASE FACTOR 2"/>
    <property type="match status" value="1"/>
</dbReference>
<dbReference type="Pfam" id="PF03462">
    <property type="entry name" value="PCRF"/>
    <property type="match status" value="1"/>
</dbReference>
<dbReference type="Pfam" id="PF00472">
    <property type="entry name" value="RF-1"/>
    <property type="match status" value="1"/>
</dbReference>
<dbReference type="SMART" id="SM00937">
    <property type="entry name" value="PCRF"/>
    <property type="match status" value="1"/>
</dbReference>
<dbReference type="SUPFAM" id="SSF75620">
    <property type="entry name" value="Release factor"/>
    <property type="match status" value="1"/>
</dbReference>
<dbReference type="PROSITE" id="PS00745">
    <property type="entry name" value="RF_PROK_I"/>
    <property type="match status" value="1"/>
</dbReference>
<feature type="chain" id="PRO_0000166811" description="Peptide chain release factor 2">
    <location>
        <begin position="1"/>
        <end position="369"/>
    </location>
</feature>
<feature type="modified residue" description="N5-methylglutamine" evidence="1">
    <location>
        <position position="251"/>
    </location>
</feature>
<gene>
    <name type="primary">prfB</name>
    <name type="ordered locus">TC_0744</name>
</gene>
<accession>P58105</accession>
<reference key="1">
    <citation type="journal article" date="2000" name="Nucleic Acids Res.">
        <title>Genome sequences of Chlamydia trachomatis MoPn and Chlamydia pneumoniae AR39.</title>
        <authorList>
            <person name="Read T.D."/>
            <person name="Brunham R.C."/>
            <person name="Shen C."/>
            <person name="Gill S.R."/>
            <person name="Heidelberg J.F."/>
            <person name="White O."/>
            <person name="Hickey E.K."/>
            <person name="Peterson J.D."/>
            <person name="Utterback T.R."/>
            <person name="Berry K.J."/>
            <person name="Bass S."/>
            <person name="Linher K.D."/>
            <person name="Weidman J.F."/>
            <person name="Khouri H.M."/>
            <person name="Craven B."/>
            <person name="Bowman C."/>
            <person name="Dodson R.J."/>
            <person name="Gwinn M.L."/>
            <person name="Nelson W.C."/>
            <person name="DeBoy R.T."/>
            <person name="Kolonay J.F."/>
            <person name="McClarty G."/>
            <person name="Salzberg S.L."/>
            <person name="Eisen J.A."/>
            <person name="Fraser C.M."/>
        </authorList>
    </citation>
    <scope>NUCLEOTIDE SEQUENCE [LARGE SCALE GENOMIC DNA]</scope>
    <source>
        <strain>MoPn / Nigg</strain>
    </source>
</reference>
<comment type="function">
    <text evidence="1">Peptide chain release factor 2 directs the termination of translation in response to the peptide chain termination codons UGA and UAA.</text>
</comment>
<comment type="subcellular location">
    <subcellularLocation>
        <location evidence="1">Cytoplasm</location>
    </subcellularLocation>
</comment>
<comment type="PTM">
    <text evidence="1">Methylated by PrmC. Methylation increases the termination efficiency of RF2 (By similarity).</text>
</comment>
<comment type="miscellaneous">
    <text evidence="1">The gene for this protein contains a UGA in-frame termination codon after Leu-23; a naturally occurring frameshift enables complete translation of RF-2. This provides a mechanism for the protein to regulate its own production (By similarity).</text>
</comment>
<comment type="similarity">
    <text evidence="2">Belongs to the prokaryotic/mitochondrial release factor family.</text>
</comment>
<name>RF2_CHLMU</name>
<evidence type="ECO:0000250" key="1"/>
<evidence type="ECO:0000305" key="2"/>
<keyword id="KW-0963">Cytoplasm</keyword>
<keyword id="KW-0488">Methylation</keyword>
<keyword id="KW-0648">Protein biosynthesis</keyword>
<keyword id="KW-0688">Ribosomal frameshifting</keyword>
<protein>
    <recommendedName>
        <fullName>Peptide chain release factor 2</fullName>
        <shortName>RF-2</shortName>
    </recommendedName>
</protein>